<proteinExistence type="inferred from homology"/>
<evidence type="ECO:0000255" key="1">
    <source>
        <dbReference type="HAMAP-Rule" id="MF_00321"/>
    </source>
</evidence>
<evidence type="ECO:0000305" key="2"/>
<name>ENGB_ECOUT</name>
<accession>Q1R448</accession>
<keyword id="KW-0131">Cell cycle</keyword>
<keyword id="KW-0132">Cell division</keyword>
<keyword id="KW-0342">GTP-binding</keyword>
<keyword id="KW-0460">Magnesium</keyword>
<keyword id="KW-0479">Metal-binding</keyword>
<keyword id="KW-0547">Nucleotide-binding</keyword>
<keyword id="KW-0717">Septation</keyword>
<gene>
    <name evidence="1" type="primary">engB</name>
    <name type="ordered locus">UTI89_C4454</name>
</gene>
<reference key="1">
    <citation type="journal article" date="2006" name="Proc. Natl. Acad. Sci. U.S.A.">
        <title>Identification of genes subject to positive selection in uropathogenic strains of Escherichia coli: a comparative genomics approach.</title>
        <authorList>
            <person name="Chen S.L."/>
            <person name="Hung C.-S."/>
            <person name="Xu J."/>
            <person name="Reigstad C.S."/>
            <person name="Magrini V."/>
            <person name="Sabo A."/>
            <person name="Blasiar D."/>
            <person name="Bieri T."/>
            <person name="Meyer R.R."/>
            <person name="Ozersky P."/>
            <person name="Armstrong J.R."/>
            <person name="Fulton R.S."/>
            <person name="Latreille J.P."/>
            <person name="Spieth J."/>
            <person name="Hooton T.M."/>
            <person name="Mardis E.R."/>
            <person name="Hultgren S.J."/>
            <person name="Gordon J.I."/>
        </authorList>
    </citation>
    <scope>NUCLEOTIDE SEQUENCE [LARGE SCALE GENOMIC DNA]</scope>
    <source>
        <strain>UTI89 / UPEC</strain>
    </source>
</reference>
<feature type="chain" id="PRO_0000266860" description="Probable GTP-binding protein EngB">
    <location>
        <begin position="1"/>
        <end position="210"/>
    </location>
</feature>
<feature type="domain" description="EngB-type G" evidence="1">
    <location>
        <begin position="25"/>
        <end position="199"/>
    </location>
</feature>
<feature type="binding site" evidence="1">
    <location>
        <begin position="33"/>
        <end position="40"/>
    </location>
    <ligand>
        <name>GTP</name>
        <dbReference type="ChEBI" id="CHEBI:37565"/>
    </ligand>
</feature>
<feature type="binding site" evidence="1">
    <location>
        <position position="40"/>
    </location>
    <ligand>
        <name>Mg(2+)</name>
        <dbReference type="ChEBI" id="CHEBI:18420"/>
    </ligand>
</feature>
<feature type="binding site" evidence="1">
    <location>
        <begin position="60"/>
        <end position="64"/>
    </location>
    <ligand>
        <name>GTP</name>
        <dbReference type="ChEBI" id="CHEBI:37565"/>
    </ligand>
</feature>
<feature type="binding site" evidence="1">
    <location>
        <position position="62"/>
    </location>
    <ligand>
        <name>Mg(2+)</name>
        <dbReference type="ChEBI" id="CHEBI:18420"/>
    </ligand>
</feature>
<feature type="binding site" evidence="1">
    <location>
        <begin position="78"/>
        <end position="81"/>
    </location>
    <ligand>
        <name>GTP</name>
        <dbReference type="ChEBI" id="CHEBI:37565"/>
    </ligand>
</feature>
<feature type="binding site" evidence="1">
    <location>
        <begin position="145"/>
        <end position="148"/>
    </location>
    <ligand>
        <name>GTP</name>
        <dbReference type="ChEBI" id="CHEBI:37565"/>
    </ligand>
</feature>
<feature type="binding site" evidence="1">
    <location>
        <begin position="178"/>
        <end position="180"/>
    </location>
    <ligand>
        <name>GTP</name>
        <dbReference type="ChEBI" id="CHEBI:37565"/>
    </ligand>
</feature>
<comment type="function">
    <text evidence="1">Necessary for normal cell division and for the maintenance of normal septation.</text>
</comment>
<comment type="cofactor">
    <cofactor evidence="1">
        <name>Mg(2+)</name>
        <dbReference type="ChEBI" id="CHEBI:18420"/>
    </cofactor>
</comment>
<comment type="similarity">
    <text evidence="1">Belongs to the TRAFAC class TrmE-Era-EngA-EngB-Septin-like GTPase superfamily. EngB GTPase family.</text>
</comment>
<comment type="sequence caution" evidence="2">
    <conflict type="erroneous initiation">
        <sequence resource="EMBL-CDS" id="ABE09866"/>
    </conflict>
</comment>
<sequence>MTNLNYQQTHFVMSAPDIRHLPSDTGIEVAFAGRSNAGKSSALNTLTNQKSLARTSKTPGRTQLINLFEVADGKRLVDLPGYGYAEVPEEMKRKWQRALGEYLEKRQSLQGLVVLMDIRHPLKDLDQQMIEWAVDSNIAVLVLLTKADKLASGARKAQLNMVREAVLAFNGDVQVETFSSLKKQGVDKLRQKLDTWFSEMQPVEETQDGE</sequence>
<dbReference type="EMBL" id="CP000243">
    <property type="protein sequence ID" value="ABE09866.1"/>
    <property type="status" value="ALT_INIT"/>
    <property type="molecule type" value="Genomic_DNA"/>
</dbReference>
<dbReference type="SMR" id="Q1R448"/>
<dbReference type="KEGG" id="eci:UTI89_C4454"/>
<dbReference type="HOGENOM" id="CLU_033732_1_0_6"/>
<dbReference type="Proteomes" id="UP000001952">
    <property type="component" value="Chromosome"/>
</dbReference>
<dbReference type="GO" id="GO:0005829">
    <property type="term" value="C:cytosol"/>
    <property type="evidence" value="ECO:0007669"/>
    <property type="project" value="TreeGrafter"/>
</dbReference>
<dbReference type="GO" id="GO:0005525">
    <property type="term" value="F:GTP binding"/>
    <property type="evidence" value="ECO:0007669"/>
    <property type="project" value="UniProtKB-UniRule"/>
</dbReference>
<dbReference type="GO" id="GO:0046872">
    <property type="term" value="F:metal ion binding"/>
    <property type="evidence" value="ECO:0007669"/>
    <property type="project" value="UniProtKB-KW"/>
</dbReference>
<dbReference type="GO" id="GO:0000917">
    <property type="term" value="P:division septum assembly"/>
    <property type="evidence" value="ECO:0007669"/>
    <property type="project" value="UniProtKB-KW"/>
</dbReference>
<dbReference type="CDD" id="cd01876">
    <property type="entry name" value="YihA_EngB"/>
    <property type="match status" value="1"/>
</dbReference>
<dbReference type="FunFam" id="3.40.50.300:FF:000098">
    <property type="entry name" value="Probable GTP-binding protein EngB"/>
    <property type="match status" value="1"/>
</dbReference>
<dbReference type="Gene3D" id="3.40.50.300">
    <property type="entry name" value="P-loop containing nucleotide triphosphate hydrolases"/>
    <property type="match status" value="1"/>
</dbReference>
<dbReference type="HAMAP" id="MF_00321">
    <property type="entry name" value="GTPase_EngB"/>
    <property type="match status" value="1"/>
</dbReference>
<dbReference type="InterPro" id="IPR030393">
    <property type="entry name" value="G_ENGB_dom"/>
</dbReference>
<dbReference type="InterPro" id="IPR006073">
    <property type="entry name" value="GTP-bd"/>
</dbReference>
<dbReference type="InterPro" id="IPR019987">
    <property type="entry name" value="GTP-bd_ribosome_bio_YsxC"/>
</dbReference>
<dbReference type="InterPro" id="IPR027417">
    <property type="entry name" value="P-loop_NTPase"/>
</dbReference>
<dbReference type="NCBIfam" id="TIGR03598">
    <property type="entry name" value="GTPase_YsxC"/>
    <property type="match status" value="1"/>
</dbReference>
<dbReference type="PANTHER" id="PTHR11649:SF13">
    <property type="entry name" value="ENGB-TYPE G DOMAIN-CONTAINING PROTEIN"/>
    <property type="match status" value="1"/>
</dbReference>
<dbReference type="PANTHER" id="PTHR11649">
    <property type="entry name" value="MSS1/TRME-RELATED GTP-BINDING PROTEIN"/>
    <property type="match status" value="1"/>
</dbReference>
<dbReference type="Pfam" id="PF01926">
    <property type="entry name" value="MMR_HSR1"/>
    <property type="match status" value="1"/>
</dbReference>
<dbReference type="SUPFAM" id="SSF52540">
    <property type="entry name" value="P-loop containing nucleoside triphosphate hydrolases"/>
    <property type="match status" value="1"/>
</dbReference>
<dbReference type="PROSITE" id="PS51706">
    <property type="entry name" value="G_ENGB"/>
    <property type="match status" value="1"/>
</dbReference>
<protein>
    <recommendedName>
        <fullName evidence="1">Probable GTP-binding protein EngB</fullName>
    </recommendedName>
</protein>
<organism>
    <name type="scientific">Escherichia coli (strain UTI89 / UPEC)</name>
    <dbReference type="NCBI Taxonomy" id="364106"/>
    <lineage>
        <taxon>Bacteria</taxon>
        <taxon>Pseudomonadati</taxon>
        <taxon>Pseudomonadota</taxon>
        <taxon>Gammaproteobacteria</taxon>
        <taxon>Enterobacterales</taxon>
        <taxon>Enterobacteriaceae</taxon>
        <taxon>Escherichia</taxon>
    </lineage>
</organism>